<protein>
    <recommendedName>
        <fullName>Anaphase-promoting complex subunit 3</fullName>
        <shortName>APC3</shortName>
    </recommendedName>
</protein>
<sequence length="970" mass="112327">MEEIMIQSIDESIHCGLIKNALFLSERLYASTANEDNLFKIAQIYYQMGKINQCLLILQQHPQITMIKNLYLLALSNYDLGNIQEAESSIIKCCIYFEKYFQPNNNNNNNNNNNNNNNNNNNNNNNNNKDKCNNSNKNNDSNNNSNSNNNENEYYGIYSDILCEFDDIVDINSISYGFDSPCSIGSVYYLMGLISKRKNQKEKAIKYLKKSVYTYPFLWVAFEQLCNICPDEIDISDLFSHTNLIHQINHLNQQQHQQHQQFQQYLSNSLNQNKVNNNNNNNNNNNNNINNNNSSNKNNEQTITSTVATGTTNITTNTIKPNNFIKPPYHPNHRVGLTPSSFYDSSIHITPINFKASIQQTNQQQQQQQQQQPQQPSQQNLQKYNNRYFVTPQTPLSHITPILSNRFSQNVVDPIPMVMDTPDSKGSQHPPSSNSQTPYTPSTPGVHHHQKQQPHQHKKSAPPSQMIKKSMSNEFDTPMSLDLKSPIFTTSTSSDVHGFTSSTSKQQQQQQQTKQQTTTTTTTTTSITDKEVLLTKTKKQVNFGKTEEFSLKSLSSSLSDDDYDEENHHYQQHHHLHHHNKSIDELELEEDDQLNITDNSVQPNFYEFDESSILDFNGGDLYEGLIELHKGQTQLLELFFILADSYRLLCLYLCKEAIESFKRLSEEQYRTGWVLTKVAKAYHELIDYKEARSIFQEVSQMEPYRLEGMELYSTLLWQMNEDAELSYIAHKYSEFDRLSPYSWVVVGNCFSLQRDHEAAIKLFRRAIQLDPDMTYAYTLCGHEYLANDELELALNAFRMAIRCDPRHYNAFYGIGLIYYRQEKYNLAEYHFRKALSINESSSVLCCYLGMTLQHNPNKIQDGIDMLYRSIEIQPKNTFAKFKLAAFLFANQQYHHAIDQLLEFKEIEPKETPIYILLGKCYKQLGELDKALDSLNTALDLDPKNSNYIRSLIDKLPLEDEDDNQDYFQLN</sequence>
<organism>
    <name type="scientific">Dictyostelium discoideum</name>
    <name type="common">Social amoeba</name>
    <dbReference type="NCBI Taxonomy" id="44689"/>
    <lineage>
        <taxon>Eukaryota</taxon>
        <taxon>Amoebozoa</taxon>
        <taxon>Evosea</taxon>
        <taxon>Eumycetozoa</taxon>
        <taxon>Dictyostelia</taxon>
        <taxon>Dictyosteliales</taxon>
        <taxon>Dictyosteliaceae</taxon>
        <taxon>Dictyostelium</taxon>
    </lineage>
</organism>
<accession>Q54J83</accession>
<name>APC3_DICDI</name>
<reference key="1">
    <citation type="journal article" date="2005" name="Nature">
        <title>The genome of the social amoeba Dictyostelium discoideum.</title>
        <authorList>
            <person name="Eichinger L."/>
            <person name="Pachebat J.A."/>
            <person name="Gloeckner G."/>
            <person name="Rajandream M.A."/>
            <person name="Sucgang R."/>
            <person name="Berriman M."/>
            <person name="Song J."/>
            <person name="Olsen R."/>
            <person name="Szafranski K."/>
            <person name="Xu Q."/>
            <person name="Tunggal B."/>
            <person name="Kummerfeld S."/>
            <person name="Madera M."/>
            <person name="Konfortov B.A."/>
            <person name="Rivero F."/>
            <person name="Bankier A.T."/>
            <person name="Lehmann R."/>
            <person name="Hamlin N."/>
            <person name="Davies R."/>
            <person name="Gaudet P."/>
            <person name="Fey P."/>
            <person name="Pilcher K."/>
            <person name="Chen G."/>
            <person name="Saunders D."/>
            <person name="Sodergren E.J."/>
            <person name="Davis P."/>
            <person name="Kerhornou A."/>
            <person name="Nie X."/>
            <person name="Hall N."/>
            <person name="Anjard C."/>
            <person name="Hemphill L."/>
            <person name="Bason N."/>
            <person name="Farbrother P."/>
            <person name="Desany B."/>
            <person name="Just E."/>
            <person name="Morio T."/>
            <person name="Rost R."/>
            <person name="Churcher C.M."/>
            <person name="Cooper J."/>
            <person name="Haydock S."/>
            <person name="van Driessche N."/>
            <person name="Cronin A."/>
            <person name="Goodhead I."/>
            <person name="Muzny D.M."/>
            <person name="Mourier T."/>
            <person name="Pain A."/>
            <person name="Lu M."/>
            <person name="Harper D."/>
            <person name="Lindsay R."/>
            <person name="Hauser H."/>
            <person name="James K.D."/>
            <person name="Quiles M."/>
            <person name="Madan Babu M."/>
            <person name="Saito T."/>
            <person name="Buchrieser C."/>
            <person name="Wardroper A."/>
            <person name="Felder M."/>
            <person name="Thangavelu M."/>
            <person name="Johnson D."/>
            <person name="Knights A."/>
            <person name="Loulseged H."/>
            <person name="Mungall K.L."/>
            <person name="Oliver K."/>
            <person name="Price C."/>
            <person name="Quail M.A."/>
            <person name="Urushihara H."/>
            <person name="Hernandez J."/>
            <person name="Rabbinowitsch E."/>
            <person name="Steffen D."/>
            <person name="Sanders M."/>
            <person name="Ma J."/>
            <person name="Kohara Y."/>
            <person name="Sharp S."/>
            <person name="Simmonds M.N."/>
            <person name="Spiegler S."/>
            <person name="Tivey A."/>
            <person name="Sugano S."/>
            <person name="White B."/>
            <person name="Walker D."/>
            <person name="Woodward J.R."/>
            <person name="Winckler T."/>
            <person name="Tanaka Y."/>
            <person name="Shaulsky G."/>
            <person name="Schleicher M."/>
            <person name="Weinstock G.M."/>
            <person name="Rosenthal A."/>
            <person name="Cox E.C."/>
            <person name="Chisholm R.L."/>
            <person name="Gibbs R.A."/>
            <person name="Loomis W.F."/>
            <person name="Platzer M."/>
            <person name="Kay R.R."/>
            <person name="Williams J.G."/>
            <person name="Dear P.H."/>
            <person name="Noegel A.A."/>
            <person name="Barrell B.G."/>
            <person name="Kuspa A."/>
        </authorList>
    </citation>
    <scope>NUCLEOTIDE SEQUENCE [LARGE SCALE GENOMIC DNA]</scope>
    <source>
        <strain>AX4</strain>
    </source>
</reference>
<keyword id="KW-0131">Cell cycle</keyword>
<keyword id="KW-0132">Cell division</keyword>
<keyword id="KW-0498">Mitosis</keyword>
<keyword id="KW-0539">Nucleus</keyword>
<keyword id="KW-1185">Reference proteome</keyword>
<keyword id="KW-0677">Repeat</keyword>
<keyword id="KW-0802">TPR repeat</keyword>
<keyword id="KW-0833">Ubl conjugation pathway</keyword>
<gene>
    <name type="primary">anapc3</name>
    <name type="synonym">apc3</name>
    <name type="synonym">cdc27</name>
    <name type="ORF">DDB_G0288223</name>
</gene>
<evidence type="ECO:0000250" key="1"/>
<evidence type="ECO:0000256" key="2">
    <source>
        <dbReference type="SAM" id="MobiDB-lite"/>
    </source>
</evidence>
<evidence type="ECO:0000305" key="3"/>
<dbReference type="EMBL" id="AAFI02000109">
    <property type="protein sequence ID" value="EAL63342.1"/>
    <property type="molecule type" value="Genomic_DNA"/>
</dbReference>
<dbReference type="RefSeq" id="XP_636853.1">
    <property type="nucleotide sequence ID" value="XM_631761.1"/>
</dbReference>
<dbReference type="SMR" id="Q54J83"/>
<dbReference type="FunCoup" id="Q54J83">
    <property type="interactions" value="249"/>
</dbReference>
<dbReference type="STRING" id="44689.Q54J83"/>
<dbReference type="GlyGen" id="Q54J83">
    <property type="glycosylation" value="2 sites"/>
</dbReference>
<dbReference type="PaxDb" id="44689-DDB0266416"/>
<dbReference type="EnsemblProtists" id="EAL63342">
    <property type="protein sequence ID" value="EAL63342"/>
    <property type="gene ID" value="DDB_G0288223"/>
</dbReference>
<dbReference type="GeneID" id="8626521"/>
<dbReference type="KEGG" id="ddi:DDB_G0288223"/>
<dbReference type="dictyBase" id="DDB_G0288223">
    <property type="gene designation" value="anapc3"/>
</dbReference>
<dbReference type="VEuPathDB" id="AmoebaDB:DDB_G0288223"/>
<dbReference type="eggNOG" id="KOG1126">
    <property type="taxonomic scope" value="Eukaryota"/>
</dbReference>
<dbReference type="HOGENOM" id="CLU_008850_1_1_1"/>
<dbReference type="InParanoid" id="Q54J83"/>
<dbReference type="OMA" id="WDKHSSH"/>
<dbReference type="Reactome" id="R-DDI-141430">
    <property type="pathway name" value="Inactivation of APC/C via direct inhibition of the APC/C complex"/>
</dbReference>
<dbReference type="Reactome" id="R-DDI-174048">
    <property type="pathway name" value="APC/C:Cdc20 mediated degradation of Cyclin B"/>
</dbReference>
<dbReference type="Reactome" id="R-DDI-174084">
    <property type="pathway name" value="Autodegradation of Cdh1 by Cdh1:APC/C"/>
</dbReference>
<dbReference type="Reactome" id="R-DDI-174154">
    <property type="pathway name" value="APC/C:Cdc20 mediated degradation of Securin"/>
</dbReference>
<dbReference type="Reactome" id="R-DDI-174178">
    <property type="pathway name" value="APC/C:Cdh1 mediated degradation of Cdc20 and other APC/C:Cdh1 targeted proteins in late mitosis/early G1"/>
</dbReference>
<dbReference type="Reactome" id="R-DDI-174184">
    <property type="pathway name" value="Cdc20:Phospho-APC/C mediated degradation of Cyclin A"/>
</dbReference>
<dbReference type="Reactome" id="R-DDI-176407">
    <property type="pathway name" value="Conversion from APC/C:Cdc20 to APC/C:Cdh1 in late anaphase"/>
</dbReference>
<dbReference type="Reactome" id="R-DDI-176408">
    <property type="pathway name" value="Regulation of APC/C activators between G1/S and early anaphase"/>
</dbReference>
<dbReference type="Reactome" id="R-DDI-176409">
    <property type="pathway name" value="APC/C:Cdc20 mediated degradation of mitotic proteins"/>
</dbReference>
<dbReference type="Reactome" id="R-DDI-176412">
    <property type="pathway name" value="Phosphorylation of the APC/C"/>
</dbReference>
<dbReference type="Reactome" id="R-DDI-179409">
    <property type="pathway name" value="APC-Cdc20 mediated degradation of Nek2A"/>
</dbReference>
<dbReference type="Reactome" id="R-DDI-2467813">
    <property type="pathway name" value="Separation of Sister Chromatids"/>
</dbReference>
<dbReference type="Reactome" id="R-DDI-2559582">
    <property type="pathway name" value="Senescence-Associated Secretory Phenotype (SASP)"/>
</dbReference>
<dbReference type="Reactome" id="R-DDI-69017">
    <property type="pathway name" value="CDK-mediated phosphorylation and removal of Cdc6"/>
</dbReference>
<dbReference type="Reactome" id="R-DDI-983168">
    <property type="pathway name" value="Antigen processing: Ubiquitination &amp; Proteasome degradation"/>
</dbReference>
<dbReference type="UniPathway" id="UPA00143"/>
<dbReference type="PRO" id="PR:Q54J83"/>
<dbReference type="Proteomes" id="UP000002195">
    <property type="component" value="Chromosome 5"/>
</dbReference>
<dbReference type="GO" id="GO:0005680">
    <property type="term" value="C:anaphase-promoting complex"/>
    <property type="evidence" value="ECO:0000318"/>
    <property type="project" value="GO_Central"/>
</dbReference>
<dbReference type="GO" id="GO:0005737">
    <property type="term" value="C:cytoplasm"/>
    <property type="evidence" value="ECO:0000318"/>
    <property type="project" value="GO_Central"/>
</dbReference>
<dbReference type="GO" id="GO:0031145">
    <property type="term" value="P:anaphase-promoting complex-dependent catabolic process"/>
    <property type="evidence" value="ECO:0000318"/>
    <property type="project" value="GO_Central"/>
</dbReference>
<dbReference type="GO" id="GO:0051301">
    <property type="term" value="P:cell division"/>
    <property type="evidence" value="ECO:0000318"/>
    <property type="project" value="GO_Central"/>
</dbReference>
<dbReference type="GO" id="GO:0007091">
    <property type="term" value="P:metaphase/anaphase transition of mitotic cell cycle"/>
    <property type="evidence" value="ECO:0000318"/>
    <property type="project" value="GO_Central"/>
</dbReference>
<dbReference type="GO" id="GO:0016567">
    <property type="term" value="P:protein ubiquitination"/>
    <property type="evidence" value="ECO:0000318"/>
    <property type="project" value="GO_Central"/>
</dbReference>
<dbReference type="Gene3D" id="1.25.40.10">
    <property type="entry name" value="Tetratricopeptide repeat domain"/>
    <property type="match status" value="4"/>
</dbReference>
<dbReference type="InterPro" id="IPR011990">
    <property type="entry name" value="TPR-like_helical_dom_sf"/>
</dbReference>
<dbReference type="InterPro" id="IPR019734">
    <property type="entry name" value="TPR_rpt"/>
</dbReference>
<dbReference type="PANTHER" id="PTHR12558">
    <property type="entry name" value="CELL DIVISION CYCLE 16,23,27"/>
    <property type="match status" value="1"/>
</dbReference>
<dbReference type="PANTHER" id="PTHR12558:SF13">
    <property type="entry name" value="CELL DIVISION CYCLE PROTEIN 27 HOMOLOG"/>
    <property type="match status" value="1"/>
</dbReference>
<dbReference type="Pfam" id="PF12895">
    <property type="entry name" value="ANAPC3"/>
    <property type="match status" value="1"/>
</dbReference>
<dbReference type="Pfam" id="PF00515">
    <property type="entry name" value="TPR_1"/>
    <property type="match status" value="2"/>
</dbReference>
<dbReference type="Pfam" id="PF13181">
    <property type="entry name" value="TPR_8"/>
    <property type="match status" value="2"/>
</dbReference>
<dbReference type="SMART" id="SM00028">
    <property type="entry name" value="TPR"/>
    <property type="match status" value="9"/>
</dbReference>
<dbReference type="SUPFAM" id="SSF48452">
    <property type="entry name" value="TPR-like"/>
    <property type="match status" value="2"/>
</dbReference>
<dbReference type="PROSITE" id="PS50005">
    <property type="entry name" value="TPR"/>
    <property type="match status" value="7"/>
</dbReference>
<dbReference type="PROSITE" id="PS50293">
    <property type="entry name" value="TPR_REGION"/>
    <property type="match status" value="2"/>
</dbReference>
<comment type="function">
    <text evidence="1">Component of the anaphase promoting complex/cyclosome (APC/C), a cell cycle-regulated E3 ubiquitin-protein ligase complex that controls progression through mitosis and the G1 phase of the cell cycle.</text>
</comment>
<comment type="pathway">
    <text>Protein modification; protein ubiquitination.</text>
</comment>
<comment type="subunit">
    <text evidence="1">The APC/C is composed of at least 13 subunits that stay tightly associated throughout the cell cycle: anapc1, anapc2, anapc3, anapc4, anapc5, anapc6, anapc7, anapc8, anapc10, anapc11, cdc20, cdc26 and cdh1.</text>
</comment>
<comment type="subcellular location">
    <subcellularLocation>
        <location evidence="1">Nucleus</location>
    </subcellularLocation>
</comment>
<comment type="similarity">
    <text evidence="3">Belongs to the APC3/CDC27 family.</text>
</comment>
<proteinExistence type="inferred from homology"/>
<feature type="chain" id="PRO_0000328277" description="Anaphase-promoting complex subunit 3">
    <location>
        <begin position="1"/>
        <end position="970"/>
    </location>
</feature>
<feature type="repeat" description="TPR 1">
    <location>
        <begin position="35"/>
        <end position="68"/>
    </location>
</feature>
<feature type="repeat" description="TPR 2">
    <location>
        <begin position="74"/>
        <end position="107"/>
    </location>
</feature>
<feature type="repeat" description="TPR 3">
    <location>
        <begin position="142"/>
        <end position="175"/>
    </location>
</feature>
<feature type="repeat" description="TPR 4">
    <location>
        <begin position="185"/>
        <end position="218"/>
    </location>
</feature>
<feature type="repeat" description="TPR 5">
    <location>
        <begin position="319"/>
        <end position="353"/>
    </location>
</feature>
<feature type="repeat" description="TPR 6">
    <location>
        <begin position="361"/>
        <end position="394"/>
    </location>
</feature>
<feature type="repeat" description="TPR 7">
    <location>
        <begin position="546"/>
        <end position="580"/>
    </location>
</feature>
<feature type="repeat" description="TPR 8">
    <location>
        <begin position="636"/>
        <end position="671"/>
    </location>
</feature>
<feature type="repeat" description="TPR 9">
    <location>
        <begin position="672"/>
        <end position="705"/>
    </location>
</feature>
<feature type="repeat" description="TPR 10">
    <location>
        <begin position="740"/>
        <end position="773"/>
    </location>
</feature>
<feature type="repeat" description="TPR 11">
    <location>
        <begin position="775"/>
        <end position="807"/>
    </location>
</feature>
<feature type="repeat" description="TPR 12">
    <location>
        <begin position="808"/>
        <end position="841"/>
    </location>
</feature>
<feature type="repeat" description="TPR 13">
    <location>
        <begin position="843"/>
        <end position="876"/>
    </location>
</feature>
<feature type="repeat" description="TPR 14">
    <location>
        <begin position="878"/>
        <end position="910"/>
    </location>
</feature>
<feature type="repeat" description="TPR 15">
    <location>
        <begin position="911"/>
        <end position="944"/>
    </location>
</feature>
<feature type="region of interest" description="Disordered" evidence="2">
    <location>
        <begin position="106"/>
        <end position="149"/>
    </location>
</feature>
<feature type="region of interest" description="Disordered" evidence="2">
    <location>
        <begin position="274"/>
        <end position="300"/>
    </location>
</feature>
<feature type="region of interest" description="Disordered" evidence="2">
    <location>
        <begin position="358"/>
        <end position="379"/>
    </location>
</feature>
<feature type="region of interest" description="Disordered" evidence="2">
    <location>
        <begin position="414"/>
        <end position="525"/>
    </location>
</feature>
<feature type="region of interest" description="Disordered" evidence="2">
    <location>
        <begin position="556"/>
        <end position="582"/>
    </location>
</feature>
<feature type="compositionally biased region" description="Low complexity" evidence="2">
    <location>
        <begin position="359"/>
        <end position="379"/>
    </location>
</feature>
<feature type="compositionally biased region" description="Polar residues" evidence="2">
    <location>
        <begin position="424"/>
        <end position="443"/>
    </location>
</feature>
<feature type="compositionally biased region" description="Basic residues" evidence="2">
    <location>
        <begin position="446"/>
        <end position="460"/>
    </location>
</feature>
<feature type="compositionally biased region" description="Low complexity" evidence="2">
    <location>
        <begin position="500"/>
        <end position="525"/>
    </location>
</feature>
<feature type="compositionally biased region" description="Basic residues" evidence="2">
    <location>
        <begin position="570"/>
        <end position="580"/>
    </location>
</feature>